<organism>
    <name type="scientific">Lactococcus lactis subsp. cremoris (strain MG1363)</name>
    <dbReference type="NCBI Taxonomy" id="416870"/>
    <lineage>
        <taxon>Bacteria</taxon>
        <taxon>Bacillati</taxon>
        <taxon>Bacillota</taxon>
        <taxon>Bacilli</taxon>
        <taxon>Lactobacillales</taxon>
        <taxon>Streptococcaceae</taxon>
        <taxon>Lactococcus</taxon>
        <taxon>Lactococcus cremoris subsp. cremoris</taxon>
    </lineage>
</organism>
<comment type="function">
    <text evidence="1">F(1)F(0) ATP synthase produces ATP from ADP in the presence of a proton or sodium gradient. F-type ATPases consist of two structural domains, F(1) containing the extramembraneous catalytic core and F(0) containing the membrane proton channel, linked together by a central stalk and a peripheral stalk. During catalysis, ATP synthesis in the catalytic domain of F(1) is coupled via a rotary mechanism of the central stalk subunits to proton translocation.</text>
</comment>
<comment type="function">
    <text evidence="1">This protein is part of the stalk that links CF(0) to CF(1). It either transmits conformational changes from CF(0) to CF(1) or is implicated in proton conduction.</text>
</comment>
<comment type="subunit">
    <text evidence="1">F-type ATPases have 2 components, F(1) - the catalytic core - and F(0) - the membrane proton channel. F(1) has five subunits: alpha(3), beta(3), gamma(1), delta(1), epsilon(1). F(0) has three main subunits: a(1), b(2) and c(10-14). The alpha and beta chains form an alternating ring which encloses part of the gamma chain. F(1) is attached to F(0) by a central stalk formed by the gamma and epsilon chains, while a peripheral stalk is formed by the delta and b chains.</text>
</comment>
<comment type="subcellular location">
    <subcellularLocation>
        <location evidence="1">Cell membrane</location>
        <topology evidence="1">Peripheral membrane protein</topology>
    </subcellularLocation>
</comment>
<comment type="similarity">
    <text evidence="1">Belongs to the ATPase delta chain family.</text>
</comment>
<name>ATPD_LACLM</name>
<proteinExistence type="inferred from homology"/>
<accession>A2RMI5</accession>
<sequence>MTKVNSQKYSKALLEVAQEKGQLEAILTEVSEMIQLFKENNLGAFLANEVYSFSAKSELIDTLLQTSSEVMSNFLNTIRSNGRLADLGEILEETKNAADDMFKIADVEVVSSIALSEAQIEKFKAMAKSKFDLNEVTVINTVNEKILGGFIVNSRGKIIDASLKTQLAKIAAEIL</sequence>
<keyword id="KW-0066">ATP synthesis</keyword>
<keyword id="KW-1003">Cell membrane</keyword>
<keyword id="KW-0139">CF(1)</keyword>
<keyword id="KW-0375">Hydrogen ion transport</keyword>
<keyword id="KW-0406">Ion transport</keyword>
<keyword id="KW-0472">Membrane</keyword>
<keyword id="KW-0813">Transport</keyword>
<protein>
    <recommendedName>
        <fullName evidence="1">ATP synthase subunit delta</fullName>
    </recommendedName>
    <alternativeName>
        <fullName evidence="1">ATP synthase F(1) sector subunit delta</fullName>
    </alternativeName>
    <alternativeName>
        <fullName evidence="1">F-type ATPase subunit delta</fullName>
        <shortName evidence="1">F-ATPase subunit delta</shortName>
    </alternativeName>
</protein>
<reference key="1">
    <citation type="journal article" date="2007" name="J. Bacteriol.">
        <title>The complete genome sequence of the lactic acid bacterial paradigm Lactococcus lactis subsp. cremoris MG1363.</title>
        <authorList>
            <person name="Wegmann U."/>
            <person name="O'Connell-Motherway M."/>
            <person name="Zomer A."/>
            <person name="Buist G."/>
            <person name="Shearman C."/>
            <person name="Canchaya C."/>
            <person name="Ventura M."/>
            <person name="Goesmann A."/>
            <person name="Gasson M.J."/>
            <person name="Kuipers O.P."/>
            <person name="van Sinderen D."/>
            <person name="Kok J."/>
        </authorList>
    </citation>
    <scope>NUCLEOTIDE SEQUENCE [LARGE SCALE GENOMIC DNA]</scope>
    <source>
        <strain>MG1363</strain>
    </source>
</reference>
<feature type="chain" id="PRO_0000382108" description="ATP synthase subunit delta">
    <location>
        <begin position="1"/>
        <end position="175"/>
    </location>
</feature>
<evidence type="ECO:0000255" key="1">
    <source>
        <dbReference type="HAMAP-Rule" id="MF_01416"/>
    </source>
</evidence>
<dbReference type="EMBL" id="AM406671">
    <property type="protein sequence ID" value="CAL98517.1"/>
    <property type="molecule type" value="Genomic_DNA"/>
</dbReference>
<dbReference type="RefSeq" id="WP_011835692.1">
    <property type="nucleotide sequence ID" value="NC_009004.1"/>
</dbReference>
<dbReference type="SMR" id="A2RMI5"/>
<dbReference type="STRING" id="416870.llmg_1949"/>
<dbReference type="KEGG" id="llm:llmg_1949"/>
<dbReference type="eggNOG" id="COG0712">
    <property type="taxonomic scope" value="Bacteria"/>
</dbReference>
<dbReference type="HOGENOM" id="CLU_085114_1_2_9"/>
<dbReference type="OrthoDB" id="9802471at2"/>
<dbReference type="PhylomeDB" id="A2RMI5"/>
<dbReference type="Proteomes" id="UP000000364">
    <property type="component" value="Chromosome"/>
</dbReference>
<dbReference type="GO" id="GO:0005886">
    <property type="term" value="C:plasma membrane"/>
    <property type="evidence" value="ECO:0007669"/>
    <property type="project" value="UniProtKB-SubCell"/>
</dbReference>
<dbReference type="GO" id="GO:0045259">
    <property type="term" value="C:proton-transporting ATP synthase complex"/>
    <property type="evidence" value="ECO:0007669"/>
    <property type="project" value="UniProtKB-KW"/>
</dbReference>
<dbReference type="GO" id="GO:0046933">
    <property type="term" value="F:proton-transporting ATP synthase activity, rotational mechanism"/>
    <property type="evidence" value="ECO:0007669"/>
    <property type="project" value="UniProtKB-UniRule"/>
</dbReference>
<dbReference type="Gene3D" id="1.10.520.20">
    <property type="entry name" value="N-terminal domain of the delta subunit of the F1F0-ATP synthase"/>
    <property type="match status" value="1"/>
</dbReference>
<dbReference type="HAMAP" id="MF_01416">
    <property type="entry name" value="ATP_synth_delta_bact"/>
    <property type="match status" value="1"/>
</dbReference>
<dbReference type="InterPro" id="IPR026015">
    <property type="entry name" value="ATP_synth_OSCP/delta_N_sf"/>
</dbReference>
<dbReference type="InterPro" id="IPR000711">
    <property type="entry name" value="ATPase_OSCP/dsu"/>
</dbReference>
<dbReference type="NCBIfam" id="TIGR01145">
    <property type="entry name" value="ATP_synt_delta"/>
    <property type="match status" value="1"/>
</dbReference>
<dbReference type="NCBIfam" id="NF004401">
    <property type="entry name" value="PRK05758.2-1"/>
    <property type="match status" value="1"/>
</dbReference>
<dbReference type="PANTHER" id="PTHR11910">
    <property type="entry name" value="ATP SYNTHASE DELTA CHAIN"/>
    <property type="match status" value="1"/>
</dbReference>
<dbReference type="Pfam" id="PF00213">
    <property type="entry name" value="OSCP"/>
    <property type="match status" value="1"/>
</dbReference>
<dbReference type="PRINTS" id="PR00125">
    <property type="entry name" value="ATPASEDELTA"/>
</dbReference>
<dbReference type="SUPFAM" id="SSF47928">
    <property type="entry name" value="N-terminal domain of the delta subunit of the F1F0-ATP synthase"/>
    <property type="match status" value="1"/>
</dbReference>
<gene>
    <name evidence="1" type="primary">atpH</name>
    <name type="ordered locus">llmg_1949</name>
</gene>